<organism>
    <name type="scientific">Bordetella pertussis (strain Tohama I / ATCC BAA-589 / NCTC 13251)</name>
    <dbReference type="NCBI Taxonomy" id="257313"/>
    <lineage>
        <taxon>Bacteria</taxon>
        <taxon>Pseudomonadati</taxon>
        <taxon>Pseudomonadota</taxon>
        <taxon>Betaproteobacteria</taxon>
        <taxon>Burkholderiales</taxon>
        <taxon>Alcaligenaceae</taxon>
        <taxon>Bordetella</taxon>
    </lineage>
</organism>
<keyword id="KW-0021">Allosteric enzyme</keyword>
<keyword id="KW-0328">Glycosyltransferase</keyword>
<keyword id="KW-0342">GTP-binding</keyword>
<keyword id="KW-0460">Magnesium</keyword>
<keyword id="KW-0547">Nucleotide-binding</keyword>
<keyword id="KW-1185">Reference proteome</keyword>
<keyword id="KW-0808">Transferase</keyword>
<proteinExistence type="inferred from homology"/>
<evidence type="ECO:0000255" key="1">
    <source>
        <dbReference type="HAMAP-Rule" id="MF_01218"/>
    </source>
</evidence>
<reference key="1">
    <citation type="journal article" date="2003" name="Nat. Genet.">
        <title>Comparative analysis of the genome sequences of Bordetella pertussis, Bordetella parapertussis and Bordetella bronchiseptica.</title>
        <authorList>
            <person name="Parkhill J."/>
            <person name="Sebaihia M."/>
            <person name="Preston A."/>
            <person name="Murphy L.D."/>
            <person name="Thomson N.R."/>
            <person name="Harris D.E."/>
            <person name="Holden M.T.G."/>
            <person name="Churcher C.M."/>
            <person name="Bentley S.D."/>
            <person name="Mungall K.L."/>
            <person name="Cerdeno-Tarraga A.-M."/>
            <person name="Temple L."/>
            <person name="James K.D."/>
            <person name="Harris B."/>
            <person name="Quail M.A."/>
            <person name="Achtman M."/>
            <person name="Atkin R."/>
            <person name="Baker S."/>
            <person name="Basham D."/>
            <person name="Bason N."/>
            <person name="Cherevach I."/>
            <person name="Chillingworth T."/>
            <person name="Collins M."/>
            <person name="Cronin A."/>
            <person name="Davis P."/>
            <person name="Doggett J."/>
            <person name="Feltwell T."/>
            <person name="Goble A."/>
            <person name="Hamlin N."/>
            <person name="Hauser H."/>
            <person name="Holroyd S."/>
            <person name="Jagels K."/>
            <person name="Leather S."/>
            <person name="Moule S."/>
            <person name="Norberczak H."/>
            <person name="O'Neil S."/>
            <person name="Ormond D."/>
            <person name="Price C."/>
            <person name="Rabbinowitsch E."/>
            <person name="Rutter S."/>
            <person name="Sanders M."/>
            <person name="Saunders D."/>
            <person name="Seeger K."/>
            <person name="Sharp S."/>
            <person name="Simmonds M."/>
            <person name="Skelton J."/>
            <person name="Squares R."/>
            <person name="Squares S."/>
            <person name="Stevens K."/>
            <person name="Unwin L."/>
            <person name="Whitehead S."/>
            <person name="Barrell B.G."/>
            <person name="Maskell D.J."/>
        </authorList>
    </citation>
    <scope>NUCLEOTIDE SEQUENCE [LARGE SCALE GENOMIC DNA]</scope>
    <source>
        <strain>Tohama I / ATCC BAA-589 / NCTC 13251</strain>
    </source>
</reference>
<dbReference type="EC" id="2.4.2.9" evidence="1"/>
<dbReference type="EMBL" id="BX640414">
    <property type="protein sequence ID" value="CAE41351.1"/>
    <property type="molecule type" value="Genomic_DNA"/>
</dbReference>
<dbReference type="RefSeq" id="NP_879837.1">
    <property type="nucleotide sequence ID" value="NC_002929.2"/>
</dbReference>
<dbReference type="RefSeq" id="WP_010930157.1">
    <property type="nucleotide sequence ID" value="NZ_CP039022.1"/>
</dbReference>
<dbReference type="SMR" id="Q7VZ79"/>
<dbReference type="STRING" id="257313.BP1052"/>
<dbReference type="PaxDb" id="257313-BP1052"/>
<dbReference type="GeneID" id="69600975"/>
<dbReference type="KEGG" id="bpe:BP1052"/>
<dbReference type="PATRIC" id="fig|257313.5.peg.1124"/>
<dbReference type="eggNOG" id="COG0035">
    <property type="taxonomic scope" value="Bacteria"/>
</dbReference>
<dbReference type="HOGENOM" id="CLU_067096_2_2_4"/>
<dbReference type="UniPathway" id="UPA00574">
    <property type="reaction ID" value="UER00636"/>
</dbReference>
<dbReference type="Proteomes" id="UP000002676">
    <property type="component" value="Chromosome"/>
</dbReference>
<dbReference type="GO" id="GO:0005525">
    <property type="term" value="F:GTP binding"/>
    <property type="evidence" value="ECO:0007669"/>
    <property type="project" value="UniProtKB-KW"/>
</dbReference>
<dbReference type="GO" id="GO:0000287">
    <property type="term" value="F:magnesium ion binding"/>
    <property type="evidence" value="ECO:0007669"/>
    <property type="project" value="UniProtKB-UniRule"/>
</dbReference>
<dbReference type="GO" id="GO:0004845">
    <property type="term" value="F:uracil phosphoribosyltransferase activity"/>
    <property type="evidence" value="ECO:0007669"/>
    <property type="project" value="UniProtKB-UniRule"/>
</dbReference>
<dbReference type="GO" id="GO:0044206">
    <property type="term" value="P:UMP salvage"/>
    <property type="evidence" value="ECO:0007669"/>
    <property type="project" value="UniProtKB-UniRule"/>
</dbReference>
<dbReference type="GO" id="GO:0006223">
    <property type="term" value="P:uracil salvage"/>
    <property type="evidence" value="ECO:0007669"/>
    <property type="project" value="InterPro"/>
</dbReference>
<dbReference type="CDD" id="cd06223">
    <property type="entry name" value="PRTases_typeI"/>
    <property type="match status" value="1"/>
</dbReference>
<dbReference type="FunFam" id="3.40.50.2020:FF:000003">
    <property type="entry name" value="Uracil phosphoribosyltransferase"/>
    <property type="match status" value="1"/>
</dbReference>
<dbReference type="Gene3D" id="3.40.50.2020">
    <property type="match status" value="1"/>
</dbReference>
<dbReference type="HAMAP" id="MF_01218_B">
    <property type="entry name" value="Upp_B"/>
    <property type="match status" value="1"/>
</dbReference>
<dbReference type="InterPro" id="IPR000836">
    <property type="entry name" value="PRibTrfase_dom"/>
</dbReference>
<dbReference type="InterPro" id="IPR029057">
    <property type="entry name" value="PRTase-like"/>
</dbReference>
<dbReference type="InterPro" id="IPR034332">
    <property type="entry name" value="Upp_B"/>
</dbReference>
<dbReference type="InterPro" id="IPR050054">
    <property type="entry name" value="UPRTase/APRTase"/>
</dbReference>
<dbReference type="InterPro" id="IPR005765">
    <property type="entry name" value="Ura_phspho_trans"/>
</dbReference>
<dbReference type="NCBIfam" id="NF001097">
    <property type="entry name" value="PRK00129.1"/>
    <property type="match status" value="1"/>
</dbReference>
<dbReference type="NCBIfam" id="TIGR01091">
    <property type="entry name" value="upp"/>
    <property type="match status" value="1"/>
</dbReference>
<dbReference type="PANTHER" id="PTHR32315">
    <property type="entry name" value="ADENINE PHOSPHORIBOSYLTRANSFERASE"/>
    <property type="match status" value="1"/>
</dbReference>
<dbReference type="PANTHER" id="PTHR32315:SF4">
    <property type="entry name" value="URACIL PHOSPHORIBOSYLTRANSFERASE, CHLOROPLASTIC"/>
    <property type="match status" value="1"/>
</dbReference>
<dbReference type="Pfam" id="PF14681">
    <property type="entry name" value="UPRTase"/>
    <property type="match status" value="1"/>
</dbReference>
<dbReference type="SUPFAM" id="SSF53271">
    <property type="entry name" value="PRTase-like"/>
    <property type="match status" value="1"/>
</dbReference>
<gene>
    <name evidence="1" type="primary">upp</name>
    <name type="ordered locus">BP1052</name>
</gene>
<protein>
    <recommendedName>
        <fullName evidence="1">Uracil phosphoribosyltransferase</fullName>
        <ecNumber evidence="1">2.4.2.9</ecNumber>
    </recommendedName>
    <alternativeName>
        <fullName evidence="1">UMP pyrophosphorylase</fullName>
    </alternativeName>
    <alternativeName>
        <fullName evidence="1">UPRTase</fullName>
    </alternativeName>
</protein>
<feature type="chain" id="PRO_0000120804" description="Uracil phosphoribosyltransferase">
    <location>
        <begin position="1"/>
        <end position="213"/>
    </location>
</feature>
<feature type="binding site" evidence="1">
    <location>
        <position position="78"/>
    </location>
    <ligand>
        <name>5-phospho-alpha-D-ribose 1-diphosphate</name>
        <dbReference type="ChEBI" id="CHEBI:58017"/>
    </ligand>
</feature>
<feature type="binding site" evidence="1">
    <location>
        <position position="103"/>
    </location>
    <ligand>
        <name>5-phospho-alpha-D-ribose 1-diphosphate</name>
        <dbReference type="ChEBI" id="CHEBI:58017"/>
    </ligand>
</feature>
<feature type="binding site" evidence="1">
    <location>
        <begin position="130"/>
        <end position="138"/>
    </location>
    <ligand>
        <name>5-phospho-alpha-D-ribose 1-diphosphate</name>
        <dbReference type="ChEBI" id="CHEBI:58017"/>
    </ligand>
</feature>
<feature type="binding site" evidence="1">
    <location>
        <position position="193"/>
    </location>
    <ligand>
        <name>uracil</name>
        <dbReference type="ChEBI" id="CHEBI:17568"/>
    </ligand>
</feature>
<feature type="binding site" evidence="1">
    <location>
        <begin position="198"/>
        <end position="200"/>
    </location>
    <ligand>
        <name>uracil</name>
        <dbReference type="ChEBI" id="CHEBI:17568"/>
    </ligand>
</feature>
<feature type="binding site" evidence="1">
    <location>
        <position position="199"/>
    </location>
    <ligand>
        <name>5-phospho-alpha-D-ribose 1-diphosphate</name>
        <dbReference type="ChEBI" id="CHEBI:58017"/>
    </ligand>
</feature>
<sequence>MPVHEIRHPLIRHKLGIMRRADLSTKSFRELSQEVAALLTYEATKDMPLAPASVEGWCGTVEVDKITGKKVTVVPILRAGIGMLDGVLSLIPGAKVSVVGVARNEETLQAHTYLERLVGELDQRLALIVDPMLATGGSMVAAIDMLKRAGCREIRALTLVSAPEGIDAVLKAHPDVQIYTASIDQGLNENGYIMPGLGDAGDRIFGTTQKHAE</sequence>
<accession>Q7VZ79</accession>
<comment type="function">
    <text evidence="1">Catalyzes the conversion of uracil and 5-phospho-alpha-D-ribose 1-diphosphate (PRPP) to UMP and diphosphate.</text>
</comment>
<comment type="catalytic activity">
    <reaction evidence="1">
        <text>UMP + diphosphate = 5-phospho-alpha-D-ribose 1-diphosphate + uracil</text>
        <dbReference type="Rhea" id="RHEA:13017"/>
        <dbReference type="ChEBI" id="CHEBI:17568"/>
        <dbReference type="ChEBI" id="CHEBI:33019"/>
        <dbReference type="ChEBI" id="CHEBI:57865"/>
        <dbReference type="ChEBI" id="CHEBI:58017"/>
        <dbReference type="EC" id="2.4.2.9"/>
    </reaction>
</comment>
<comment type="cofactor">
    <cofactor evidence="1">
        <name>Mg(2+)</name>
        <dbReference type="ChEBI" id="CHEBI:18420"/>
    </cofactor>
    <text evidence="1">Binds 1 Mg(2+) ion per subunit. The magnesium is bound as Mg-PRPP.</text>
</comment>
<comment type="activity regulation">
    <text evidence="1">Allosterically activated by GTP.</text>
</comment>
<comment type="pathway">
    <text evidence="1">Pyrimidine metabolism; UMP biosynthesis via salvage pathway; UMP from uracil: step 1/1.</text>
</comment>
<comment type="similarity">
    <text evidence="1">Belongs to the UPRTase family.</text>
</comment>
<name>UPP_BORPE</name>